<feature type="chain" id="PRO_0000054124" description="Potassium channel AKT6">
    <location>
        <begin position="1"/>
        <end position="888"/>
    </location>
</feature>
<feature type="topological domain" description="Cytoplasmic" evidence="2">
    <location>
        <begin position="1"/>
        <end position="84"/>
    </location>
</feature>
<feature type="transmembrane region" description="Helical; Name=Segment S1" evidence="2">
    <location>
        <begin position="85"/>
        <end position="105"/>
    </location>
</feature>
<feature type="topological domain" description="Extracellular" evidence="2">
    <location>
        <begin position="106"/>
        <end position="113"/>
    </location>
</feature>
<feature type="transmembrane region" description="Helical; Name=Segment S2" evidence="2">
    <location>
        <begin position="114"/>
        <end position="134"/>
    </location>
</feature>
<feature type="topological domain" description="Cytoplasmic" evidence="2">
    <location>
        <begin position="135"/>
        <end position="155"/>
    </location>
</feature>
<feature type="transmembrane region" description="Helical; Name=Segment S3" evidence="2">
    <location>
        <begin position="156"/>
        <end position="176"/>
    </location>
</feature>
<feature type="topological domain" description="Extracellular" evidence="2">
    <location>
        <begin position="177"/>
        <end position="184"/>
    </location>
</feature>
<feature type="transmembrane region" description="Helical; Voltage-sensor; Name=Segment S4" evidence="2">
    <location>
        <begin position="185"/>
        <end position="205"/>
    </location>
</feature>
<feature type="topological domain" description="Cytoplasmic" evidence="2">
    <location>
        <begin position="206"/>
        <end position="219"/>
    </location>
</feature>
<feature type="transmembrane region" description="Helical; Name=Segment S5" evidence="2">
    <location>
        <begin position="220"/>
        <end position="240"/>
    </location>
</feature>
<feature type="topological domain" description="Extracellular" evidence="2">
    <location>
        <begin position="241"/>
        <end position="267"/>
    </location>
</feature>
<feature type="intramembrane region" description="Pore-forming; Name=Segment H5" evidence="2">
    <location>
        <begin position="268"/>
        <end position="287"/>
    </location>
</feature>
<feature type="topological domain" description="Extracellular" evidence="2">
    <location>
        <begin position="288"/>
        <end position="291"/>
    </location>
</feature>
<feature type="transmembrane region" description="Helical; Name=Segment S6" evidence="2">
    <location>
        <begin position="292"/>
        <end position="312"/>
    </location>
</feature>
<feature type="topological domain" description="Cytoplasmic" evidence="2">
    <location>
        <begin position="313"/>
        <end position="888"/>
    </location>
</feature>
<feature type="repeat" description="ANK 1">
    <location>
        <begin position="543"/>
        <end position="572"/>
    </location>
</feature>
<feature type="repeat" description="ANK 2">
    <location>
        <begin position="576"/>
        <end position="605"/>
    </location>
</feature>
<feature type="repeat" description="ANK 3">
    <location>
        <begin position="609"/>
        <end position="638"/>
    </location>
</feature>
<feature type="repeat" description="ANK 4">
    <location>
        <begin position="640"/>
        <end position="669"/>
    </location>
</feature>
<feature type="repeat" description="ANK 5">
    <location>
        <begin position="673"/>
        <end position="702"/>
    </location>
</feature>
<feature type="domain" description="KHA" evidence="3">
    <location>
        <begin position="822"/>
        <end position="888"/>
    </location>
</feature>
<feature type="region of interest" description="Disordered" evidence="4">
    <location>
        <begin position="10"/>
        <end position="31"/>
    </location>
</feature>
<feature type="binding site">
    <location>
        <begin position="398"/>
        <end position="519"/>
    </location>
    <ligand>
        <name>a nucleoside 3',5'-cyclic phosphate</name>
        <dbReference type="ChEBI" id="CHEBI:58464"/>
    </ligand>
</feature>
<evidence type="ECO:0000250" key="1"/>
<evidence type="ECO:0000255" key="2"/>
<evidence type="ECO:0000255" key="3">
    <source>
        <dbReference type="PROSITE-ProRule" id="PRU00823"/>
    </source>
</evidence>
<evidence type="ECO:0000256" key="4">
    <source>
        <dbReference type="SAM" id="MobiDB-lite"/>
    </source>
</evidence>
<evidence type="ECO:0000269" key="5">
    <source>
    </source>
</evidence>
<evidence type="ECO:0000269" key="6">
    <source>
    </source>
</evidence>
<evidence type="ECO:0000305" key="7"/>
<evidence type="ECO:0000305" key="8">
    <source>
    </source>
</evidence>
<name>AKT6_ARATH</name>
<protein>
    <recommendedName>
        <fullName>Potassium channel AKT6</fullName>
    </recommendedName>
    <alternativeName>
        <fullName>Potassium channel SPIK</fullName>
    </alternativeName>
    <alternativeName>
        <fullName>Shaker pollen inward rectifier K(+) channel</fullName>
    </alternativeName>
</protein>
<sequence>MEKKKVWFWGVKDDGEGGGGRGGGRTKDAEDDVADHLSRDGTMSQYSLSKGLLPSLGANNRSSRDVILPRFIVSPFDPRYRAWETFLVFLVLYTAWASPFEFGFLQKPRPPLSILDNIVNGFFAVDIVLTFFVAFLDKVTYLLVDDPKRIAWRYASTWLIFDVVSTFPYEIFGSLLHESIQGYGIFSMLRLWRLRRVSNCFARLEKDRKYSYFWVRCSKLLLVTLFVIHCGACFLYSIAAHYPDPSKTFMALTDENWKESPIAVRYNTAMYWSITTFSTTGYGDIHGVNSREMTFILFYMVFNLGLSAYIIGNMTNLVVHVTGRTRKFRDTIQAASGFGQRNNLPVRLQDQMVAHLCLRYRTDSEGLQQQEIIDSLPKAIRSSISHYLFYEVVDKIYLFHGISNDLLFQLVTEMKAEYFPPKEDVILQNEAPTDFYILVTGAVDIIARVNGVEQVVSEAQRGHVFGEVGVLCYRPQLFTVRTKRLSQLLRLNRTVLLNLVQANVGDGAIIMNNLLQHLKDSEDPVMKGVLADTEHMLAQGKMDLPLSLCFAAARGDDLLLHQLLRRGSSPNEMDKDGRTALHIAASKGSHYCVVLLLEHGADPNIRDSEGNVPLWEAIIGRHREIAKLLAENGAKLSLDSVSYFSGLAVEKNCLDALKDIIKYGGDVTLPDGNGTTALHRAVSEGHLEIVKFLLDQGADLDWPDSYGWTPRGLADHQGNEEIKTLFHNHRPVEKKPKPIPGIPQSPVTGKPLMKYSSEPTMHSGELVLDGGQVVVSQKRKLNNFRNSLFGIISAANSADDGGEVPRSPAVPGGGGSMIYPERVTISSPENGETGGKVVLLPNSMEELLKIGENKMGFVPTKVLTREGAEIDDITLIRDGDFLLLSRDP</sequence>
<reference key="1">
    <citation type="journal article" date="2002" name="Genes Dev.">
        <title>Pollen tube development and competitive ability are impaired by disruption of a Shaker K(+) channel in Arabidopsis.</title>
        <authorList>
            <person name="Mouline K."/>
            <person name="Very A.-A."/>
            <person name="Gaymard F."/>
            <person name="Boucherez J."/>
            <person name="Pilot G."/>
            <person name="Devic M."/>
            <person name="Bouchez D."/>
            <person name="Thibaud J.-B."/>
            <person name="Sentenac H."/>
        </authorList>
    </citation>
    <scope>NUCLEOTIDE SEQUENCE [GENOMIC DNA]</scope>
    <scope>CHARACTERIZATION</scope>
    <scope>TISSUE SPECIFICITY</scope>
    <scope>FUNCTION</scope>
    <source>
        <strain>cv. Columbia</strain>
    </source>
</reference>
<reference key="2">
    <citation type="journal article" date="1999" name="Nature">
        <title>Sequence and analysis of chromosome 2 of the plant Arabidopsis thaliana.</title>
        <authorList>
            <person name="Lin X."/>
            <person name="Kaul S."/>
            <person name="Rounsley S.D."/>
            <person name="Shea T.P."/>
            <person name="Benito M.-I."/>
            <person name="Town C.D."/>
            <person name="Fujii C.Y."/>
            <person name="Mason T.M."/>
            <person name="Bowman C.L."/>
            <person name="Barnstead M.E."/>
            <person name="Feldblyum T.V."/>
            <person name="Buell C.R."/>
            <person name="Ketchum K.A."/>
            <person name="Lee J.J."/>
            <person name="Ronning C.M."/>
            <person name="Koo H.L."/>
            <person name="Moffat K.S."/>
            <person name="Cronin L.A."/>
            <person name="Shen M."/>
            <person name="Pai G."/>
            <person name="Van Aken S."/>
            <person name="Umayam L."/>
            <person name="Tallon L.J."/>
            <person name="Gill J.E."/>
            <person name="Adams M.D."/>
            <person name="Carrera A.J."/>
            <person name="Creasy T.H."/>
            <person name="Goodman H.M."/>
            <person name="Somerville C.R."/>
            <person name="Copenhaver G.P."/>
            <person name="Preuss D."/>
            <person name="Nierman W.C."/>
            <person name="White O."/>
            <person name="Eisen J.A."/>
            <person name="Salzberg S.L."/>
            <person name="Fraser C.M."/>
            <person name="Venter J.C."/>
        </authorList>
    </citation>
    <scope>NUCLEOTIDE SEQUENCE [LARGE SCALE GENOMIC DNA]</scope>
    <source>
        <strain>cv. Columbia</strain>
    </source>
</reference>
<reference key="3">
    <citation type="journal article" date="2017" name="Plant J.">
        <title>Araport11: a complete reannotation of the Arabidopsis thaliana reference genome.</title>
        <authorList>
            <person name="Cheng C.Y."/>
            <person name="Krishnakumar V."/>
            <person name="Chan A.P."/>
            <person name="Thibaud-Nissen F."/>
            <person name="Schobel S."/>
            <person name="Town C.D."/>
        </authorList>
    </citation>
    <scope>GENOME REANNOTATION</scope>
    <source>
        <strain>cv. Columbia</strain>
    </source>
</reference>
<reference key="4">
    <citation type="journal article" date="2002" name="Science">
        <title>Functional annotation of a full-length Arabidopsis cDNA collection.</title>
        <authorList>
            <person name="Seki M."/>
            <person name="Narusaka M."/>
            <person name="Kamiya A."/>
            <person name="Ishida J."/>
            <person name="Satou M."/>
            <person name="Sakurai T."/>
            <person name="Nakajima M."/>
            <person name="Enju A."/>
            <person name="Akiyama K."/>
            <person name="Oono Y."/>
            <person name="Muramatsu M."/>
            <person name="Hayashizaki Y."/>
            <person name="Kawai J."/>
            <person name="Carninci P."/>
            <person name="Itoh M."/>
            <person name="Ishii Y."/>
            <person name="Arakawa T."/>
            <person name="Shibata K."/>
            <person name="Shinagawa A."/>
            <person name="Shinozaki K."/>
        </authorList>
    </citation>
    <scope>NUCLEOTIDE SEQUENCE [LARGE SCALE MRNA] OF 407-888</scope>
    <source>
        <strain>cv. Columbia</strain>
    </source>
</reference>
<reference key="5">
    <citation type="journal article" date="2000" name="Plant Cell">
        <title>A shaker-like K(+) channel with weak rectification is expressed in both source and sink phloem tissues of Arabidopsis.</title>
        <authorList>
            <person name="Lacombe B."/>
            <person name="Pilot G."/>
            <person name="Michard E."/>
            <person name="Gaymard F."/>
            <person name="Sentenac H."/>
            <person name="Thibaud J.-B."/>
        </authorList>
    </citation>
    <scope>TISSUE SPECIFICITY</scope>
</reference>
<reference key="6">
    <citation type="journal article" date="2001" name="Plant Physiol.">
        <title>Phylogenetic relationships within cation transporter families of Arabidopsis.</title>
        <authorList>
            <person name="Maeser P."/>
            <person name="Thomine S."/>
            <person name="Schroeder J.I."/>
            <person name="Ward J.M."/>
            <person name="Hirschi K."/>
            <person name="Sze H."/>
            <person name="Talke I.N."/>
            <person name="Amtmann A."/>
            <person name="Maathuis F.J.M."/>
            <person name="Sanders D."/>
            <person name="Harper J.F."/>
            <person name="Tchieu J."/>
            <person name="Gribskov M."/>
            <person name="Persans M.W."/>
            <person name="Salt D.E."/>
            <person name="Kim S.A."/>
            <person name="Guerinot M.L."/>
        </authorList>
    </citation>
    <scope>GENE FAMILY</scope>
    <scope>NOMENCLATURE</scope>
</reference>
<gene>
    <name type="primary">AKT6</name>
    <name type="synonym">SPIK</name>
    <name type="ordered locus">At2g25600</name>
    <name type="ORF">F3N11.5</name>
</gene>
<dbReference type="EMBL" id="AJ309323">
    <property type="protein sequence ID" value="CAC85283.1"/>
    <property type="molecule type" value="Genomic_DNA"/>
</dbReference>
<dbReference type="EMBL" id="AC006053">
    <property type="protein sequence ID" value="AAD31377.1"/>
    <property type="molecule type" value="Genomic_DNA"/>
</dbReference>
<dbReference type="EMBL" id="CP002685">
    <property type="protein sequence ID" value="AEC07722.1"/>
    <property type="molecule type" value="Genomic_DNA"/>
</dbReference>
<dbReference type="EMBL" id="AK118279">
    <property type="protein sequence ID" value="BAC42897.1"/>
    <property type="molecule type" value="mRNA"/>
</dbReference>
<dbReference type="PIR" id="D84650">
    <property type="entry name" value="D84650"/>
</dbReference>
<dbReference type="RefSeq" id="NP_180131.3">
    <property type="nucleotide sequence ID" value="NM_128118.5"/>
</dbReference>
<dbReference type="SMR" id="Q8GXE6"/>
<dbReference type="BioGRID" id="2451">
    <property type="interactions" value="7"/>
</dbReference>
<dbReference type="FunCoup" id="Q8GXE6">
    <property type="interactions" value="72"/>
</dbReference>
<dbReference type="IntAct" id="Q8GXE6">
    <property type="interactions" value="7"/>
</dbReference>
<dbReference type="STRING" id="3702.Q8GXE6"/>
<dbReference type="TCDB" id="1.A.1.4.8">
    <property type="family name" value="the voltage-gated ion channel (vic) superfamily"/>
</dbReference>
<dbReference type="PaxDb" id="3702-AT2G25600.1"/>
<dbReference type="ProteomicsDB" id="244705"/>
<dbReference type="EnsemblPlants" id="AT2G25600.1">
    <property type="protein sequence ID" value="AT2G25600.1"/>
    <property type="gene ID" value="AT2G25600"/>
</dbReference>
<dbReference type="GeneID" id="817099"/>
<dbReference type="Gramene" id="AT2G25600.1">
    <property type="protein sequence ID" value="AT2G25600.1"/>
    <property type="gene ID" value="AT2G25600"/>
</dbReference>
<dbReference type="KEGG" id="ath:AT2G25600"/>
<dbReference type="Araport" id="AT2G25600"/>
<dbReference type="TAIR" id="AT2G25600">
    <property type="gene designation" value="SPIK"/>
</dbReference>
<dbReference type="eggNOG" id="KOG0498">
    <property type="taxonomic scope" value="Eukaryota"/>
</dbReference>
<dbReference type="HOGENOM" id="CLU_005746_8_3_1"/>
<dbReference type="InParanoid" id="Q8GXE6"/>
<dbReference type="OMA" id="SHRNGME"/>
<dbReference type="PhylomeDB" id="Q8GXE6"/>
<dbReference type="PRO" id="PR:Q8GXE6"/>
<dbReference type="Proteomes" id="UP000006548">
    <property type="component" value="Chromosome 2"/>
</dbReference>
<dbReference type="ExpressionAtlas" id="Q8GXE6">
    <property type="expression patterns" value="baseline and differential"/>
</dbReference>
<dbReference type="GO" id="GO:0034702">
    <property type="term" value="C:monoatomic ion channel complex"/>
    <property type="evidence" value="ECO:0007669"/>
    <property type="project" value="UniProtKB-KW"/>
</dbReference>
<dbReference type="GO" id="GO:0005249">
    <property type="term" value="F:voltage-gated potassium channel activity"/>
    <property type="evidence" value="ECO:0007669"/>
    <property type="project" value="InterPro"/>
</dbReference>
<dbReference type="CDD" id="cd00038">
    <property type="entry name" value="CAP_ED"/>
    <property type="match status" value="1"/>
</dbReference>
<dbReference type="FunFam" id="2.60.120.10:FF:000074">
    <property type="entry name" value="Potassium channel KAT2"/>
    <property type="match status" value="1"/>
</dbReference>
<dbReference type="FunFam" id="1.10.287.70:FF:000123">
    <property type="entry name" value="Potassium channel KAT3"/>
    <property type="match status" value="1"/>
</dbReference>
<dbReference type="Gene3D" id="1.10.287.70">
    <property type="match status" value="1"/>
</dbReference>
<dbReference type="Gene3D" id="1.25.40.20">
    <property type="entry name" value="Ankyrin repeat-containing domain"/>
    <property type="match status" value="1"/>
</dbReference>
<dbReference type="Gene3D" id="2.60.120.10">
    <property type="entry name" value="Jelly Rolls"/>
    <property type="match status" value="1"/>
</dbReference>
<dbReference type="InterPro" id="IPR002110">
    <property type="entry name" value="Ankyrin_rpt"/>
</dbReference>
<dbReference type="InterPro" id="IPR036770">
    <property type="entry name" value="Ankyrin_rpt-contain_sf"/>
</dbReference>
<dbReference type="InterPro" id="IPR000595">
    <property type="entry name" value="cNMP-bd_dom"/>
</dbReference>
<dbReference type="InterPro" id="IPR018490">
    <property type="entry name" value="cNMP-bd_dom_sf"/>
</dbReference>
<dbReference type="InterPro" id="IPR005821">
    <property type="entry name" value="Ion_trans_dom"/>
</dbReference>
<dbReference type="InterPro" id="IPR003938">
    <property type="entry name" value="K_chnl_volt-dep_EAG/ELK/ERG"/>
</dbReference>
<dbReference type="InterPro" id="IPR045319">
    <property type="entry name" value="KAT/AKT"/>
</dbReference>
<dbReference type="InterPro" id="IPR021789">
    <property type="entry name" value="KHA_dom"/>
</dbReference>
<dbReference type="InterPro" id="IPR014710">
    <property type="entry name" value="RmlC-like_jellyroll"/>
</dbReference>
<dbReference type="PANTHER" id="PTHR45743">
    <property type="entry name" value="POTASSIUM CHANNEL AKT1"/>
    <property type="match status" value="1"/>
</dbReference>
<dbReference type="PANTHER" id="PTHR45743:SF13">
    <property type="entry name" value="POTASSIUM CHANNEL AKT6"/>
    <property type="match status" value="1"/>
</dbReference>
<dbReference type="Pfam" id="PF12796">
    <property type="entry name" value="Ank_2"/>
    <property type="match status" value="2"/>
</dbReference>
<dbReference type="Pfam" id="PF00027">
    <property type="entry name" value="cNMP_binding"/>
    <property type="match status" value="1"/>
</dbReference>
<dbReference type="Pfam" id="PF00520">
    <property type="entry name" value="Ion_trans"/>
    <property type="match status" value="1"/>
</dbReference>
<dbReference type="Pfam" id="PF11834">
    <property type="entry name" value="KHA"/>
    <property type="match status" value="1"/>
</dbReference>
<dbReference type="PRINTS" id="PR01463">
    <property type="entry name" value="EAGCHANLFMLY"/>
</dbReference>
<dbReference type="SMART" id="SM00248">
    <property type="entry name" value="ANK"/>
    <property type="match status" value="4"/>
</dbReference>
<dbReference type="SMART" id="SM00100">
    <property type="entry name" value="cNMP"/>
    <property type="match status" value="1"/>
</dbReference>
<dbReference type="SUPFAM" id="SSF48403">
    <property type="entry name" value="Ankyrin repeat"/>
    <property type="match status" value="1"/>
</dbReference>
<dbReference type="SUPFAM" id="SSF51206">
    <property type="entry name" value="cAMP-binding domain-like"/>
    <property type="match status" value="1"/>
</dbReference>
<dbReference type="SUPFAM" id="SSF81324">
    <property type="entry name" value="Voltage-gated potassium channels"/>
    <property type="match status" value="1"/>
</dbReference>
<dbReference type="PROSITE" id="PS50297">
    <property type="entry name" value="ANK_REP_REGION"/>
    <property type="match status" value="1"/>
</dbReference>
<dbReference type="PROSITE" id="PS50088">
    <property type="entry name" value="ANK_REPEAT"/>
    <property type="match status" value="3"/>
</dbReference>
<dbReference type="PROSITE" id="PS50042">
    <property type="entry name" value="CNMP_BINDING_3"/>
    <property type="match status" value="1"/>
</dbReference>
<dbReference type="PROSITE" id="PS51490">
    <property type="entry name" value="KHA"/>
    <property type="match status" value="1"/>
</dbReference>
<organism>
    <name type="scientific">Arabidopsis thaliana</name>
    <name type="common">Mouse-ear cress</name>
    <dbReference type="NCBI Taxonomy" id="3702"/>
    <lineage>
        <taxon>Eukaryota</taxon>
        <taxon>Viridiplantae</taxon>
        <taxon>Streptophyta</taxon>
        <taxon>Embryophyta</taxon>
        <taxon>Tracheophyta</taxon>
        <taxon>Spermatophyta</taxon>
        <taxon>Magnoliopsida</taxon>
        <taxon>eudicotyledons</taxon>
        <taxon>Gunneridae</taxon>
        <taxon>Pentapetalae</taxon>
        <taxon>rosids</taxon>
        <taxon>malvids</taxon>
        <taxon>Brassicales</taxon>
        <taxon>Brassicaceae</taxon>
        <taxon>Camelineae</taxon>
        <taxon>Arabidopsis</taxon>
    </lineage>
</organism>
<proteinExistence type="evidence at protein level"/>
<comment type="function">
    <text evidence="6">Highly selective inward-rectifying potassium channel that could mediate potassium uptake in the pollen membrane. Plays an important role in pollen tube development. Assuming opened or closed conformations in response to the voltage difference across the membrane, the channel is activated by hyperpolarization. May interact with the cytoskeleton or with regulatory proteins.</text>
</comment>
<comment type="subunit">
    <text evidence="1">The potassium channel is probably composed of a homo- or heterotetrameric complex of pore-forming subunits.</text>
</comment>
<comment type="subcellular location">
    <subcellularLocation>
        <location>Membrane</location>
        <topology>Multi-pass membrane protein</topology>
    </subcellularLocation>
</comment>
<comment type="tissue specificity">
    <text evidence="5 6">Predominantly expressed in flowers; especially in pollen.</text>
</comment>
<comment type="domain">
    <text>The segment S4 is probably the voltage-sensor and is characterized by a series of positively charged amino acids. The pore-forming region H5 is enclosed by the transmembrane segments S5 and S6 in the Shaker-type (1P/6TM) and contains the GYGD signature motif which seems to be involved in potassium selectivity.</text>
</comment>
<comment type="domain">
    <text>The KHA domain (rich in hydrophobic and acidic residues) present in the C-terminal part is likely to be important for tetramerization.</text>
</comment>
<comment type="similarity">
    <text evidence="7">Belongs to the potassium channel family. Plant (TC 1.A.1.4) subfamily.</text>
</comment>
<comment type="caution">
    <text evidence="8">Was originally erroneously termed AKT5.</text>
</comment>
<accession>Q8GXE6</accession>
<accession>Q9SLA3</accession>
<keyword id="KW-0040">ANK repeat</keyword>
<keyword id="KW-0407">Ion channel</keyword>
<keyword id="KW-0406">Ion transport</keyword>
<keyword id="KW-0472">Membrane</keyword>
<keyword id="KW-0630">Potassium</keyword>
<keyword id="KW-0631">Potassium channel</keyword>
<keyword id="KW-0633">Potassium transport</keyword>
<keyword id="KW-1185">Reference proteome</keyword>
<keyword id="KW-0677">Repeat</keyword>
<keyword id="KW-0812">Transmembrane</keyword>
<keyword id="KW-1133">Transmembrane helix</keyword>
<keyword id="KW-0813">Transport</keyword>
<keyword id="KW-0851">Voltage-gated channel</keyword>